<protein>
    <recommendedName>
        <fullName evidence="1">NAD(P)H-quinone oxidoreductase chain 4, chloroplastic</fullName>
        <ecNumber evidence="1">7.1.1.-</ecNumber>
    </recommendedName>
    <alternativeName>
        <fullName evidence="1">NAD(P)H dehydrogenase, chain 4</fullName>
    </alternativeName>
    <alternativeName>
        <fullName evidence="1">NADH-plastoquinone oxidoreductase chain 4</fullName>
    </alternativeName>
</protein>
<feature type="chain" id="PRO_0000118025" description="NAD(P)H-quinone oxidoreductase chain 4, chloroplastic">
    <location>
        <begin position="1"/>
        <end position="500"/>
    </location>
</feature>
<feature type="transmembrane region" description="Helical" evidence="1">
    <location>
        <begin position="3"/>
        <end position="23"/>
    </location>
</feature>
<feature type="transmembrane region" description="Helical" evidence="1">
    <location>
        <begin position="37"/>
        <end position="57"/>
    </location>
</feature>
<feature type="transmembrane region" description="Helical" evidence="1">
    <location>
        <begin position="84"/>
        <end position="104"/>
    </location>
</feature>
<feature type="transmembrane region" description="Helical" evidence="1">
    <location>
        <begin position="111"/>
        <end position="129"/>
    </location>
</feature>
<feature type="transmembrane region" description="Helical" evidence="1">
    <location>
        <begin position="134"/>
        <end position="154"/>
    </location>
</feature>
<feature type="transmembrane region" description="Helical" evidence="1">
    <location>
        <begin position="167"/>
        <end position="187"/>
    </location>
</feature>
<feature type="transmembrane region" description="Helical" evidence="1">
    <location>
        <begin position="208"/>
        <end position="228"/>
    </location>
</feature>
<feature type="transmembrane region" description="Helical" evidence="1">
    <location>
        <begin position="242"/>
        <end position="262"/>
    </location>
</feature>
<feature type="transmembrane region" description="Helical" evidence="1">
    <location>
        <begin position="272"/>
        <end position="292"/>
    </location>
</feature>
<feature type="transmembrane region" description="Helical" evidence="1">
    <location>
        <begin position="305"/>
        <end position="325"/>
    </location>
</feature>
<feature type="transmembrane region" description="Helical" evidence="1">
    <location>
        <begin position="330"/>
        <end position="350"/>
    </location>
</feature>
<feature type="transmembrane region" description="Helical" evidence="1">
    <location>
        <begin position="386"/>
        <end position="406"/>
    </location>
</feature>
<feature type="transmembrane region" description="Helical" evidence="1">
    <location>
        <begin position="416"/>
        <end position="436"/>
    </location>
</feature>
<feature type="transmembrane region" description="Helical" evidence="1">
    <location>
        <begin position="462"/>
        <end position="482"/>
    </location>
</feature>
<evidence type="ECO:0000255" key="1">
    <source>
        <dbReference type="HAMAP-Rule" id="MF_00491"/>
    </source>
</evidence>
<dbReference type="EC" id="7.1.1.-" evidence="1"/>
<dbReference type="EMBL" id="AY582139">
    <property type="protein sequence ID" value="AAT98560.1"/>
    <property type="molecule type" value="Genomic_DNA"/>
</dbReference>
<dbReference type="RefSeq" id="YP_087016.1">
    <property type="nucleotide sequence ID" value="NC_006290.1"/>
</dbReference>
<dbReference type="SMR" id="Q68RV6"/>
<dbReference type="GeneID" id="3021476"/>
<dbReference type="GO" id="GO:0009535">
    <property type="term" value="C:chloroplast thylakoid membrane"/>
    <property type="evidence" value="ECO:0007669"/>
    <property type="project" value="UniProtKB-SubCell"/>
</dbReference>
<dbReference type="GO" id="GO:0008137">
    <property type="term" value="F:NADH dehydrogenase (ubiquinone) activity"/>
    <property type="evidence" value="ECO:0007669"/>
    <property type="project" value="InterPro"/>
</dbReference>
<dbReference type="GO" id="GO:0048039">
    <property type="term" value="F:ubiquinone binding"/>
    <property type="evidence" value="ECO:0007669"/>
    <property type="project" value="TreeGrafter"/>
</dbReference>
<dbReference type="GO" id="GO:0042773">
    <property type="term" value="P:ATP synthesis coupled electron transport"/>
    <property type="evidence" value="ECO:0007669"/>
    <property type="project" value="InterPro"/>
</dbReference>
<dbReference type="GO" id="GO:0015990">
    <property type="term" value="P:electron transport coupled proton transport"/>
    <property type="evidence" value="ECO:0007669"/>
    <property type="project" value="TreeGrafter"/>
</dbReference>
<dbReference type="HAMAP" id="MF_00491">
    <property type="entry name" value="NDH1_NuoM"/>
    <property type="match status" value="1"/>
</dbReference>
<dbReference type="InterPro" id="IPR022997">
    <property type="entry name" value="NADH_Q_OxRdtase_chain4"/>
</dbReference>
<dbReference type="InterPro" id="IPR010227">
    <property type="entry name" value="NADH_Q_OxRdtase_chainM/4"/>
</dbReference>
<dbReference type="InterPro" id="IPR003918">
    <property type="entry name" value="NADH_UbQ_OxRdtase"/>
</dbReference>
<dbReference type="InterPro" id="IPR001750">
    <property type="entry name" value="ND/Mrp_TM"/>
</dbReference>
<dbReference type="NCBIfam" id="TIGR01972">
    <property type="entry name" value="NDH_I_M"/>
    <property type="match status" value="1"/>
</dbReference>
<dbReference type="PANTHER" id="PTHR43507:SF21">
    <property type="entry name" value="NAD(P)H-QUINONE OXIDOREDUCTASE CHAIN 4, CHLOROPLASTIC"/>
    <property type="match status" value="1"/>
</dbReference>
<dbReference type="PANTHER" id="PTHR43507">
    <property type="entry name" value="NADH-UBIQUINONE OXIDOREDUCTASE CHAIN 4"/>
    <property type="match status" value="1"/>
</dbReference>
<dbReference type="Pfam" id="PF00361">
    <property type="entry name" value="Proton_antipo_M"/>
    <property type="match status" value="1"/>
</dbReference>
<dbReference type="PRINTS" id="PR01437">
    <property type="entry name" value="NUOXDRDTASE4"/>
</dbReference>
<accession>Q68RV6</accession>
<name>NU4C_PANGI</name>
<organism>
    <name type="scientific">Panax ginseng</name>
    <name type="common">Korean ginseng</name>
    <dbReference type="NCBI Taxonomy" id="4054"/>
    <lineage>
        <taxon>Eukaryota</taxon>
        <taxon>Viridiplantae</taxon>
        <taxon>Streptophyta</taxon>
        <taxon>Embryophyta</taxon>
        <taxon>Tracheophyta</taxon>
        <taxon>Spermatophyta</taxon>
        <taxon>Magnoliopsida</taxon>
        <taxon>eudicotyledons</taxon>
        <taxon>Gunneridae</taxon>
        <taxon>Pentapetalae</taxon>
        <taxon>asterids</taxon>
        <taxon>campanulids</taxon>
        <taxon>Apiales</taxon>
        <taxon>Araliaceae</taxon>
        <taxon>Panax</taxon>
    </lineage>
</organism>
<sequence length="500" mass="56216">MNFFPWLTIIVVLPIFAGSVIFFLPHRGNRVIRWYTICICILELLLTTYAFCYHFQFDDPLIQLVEDYKWINFFAFHWRLGIDGLSIGPILLTGFITTLATLAARPVTRDSRLFHFLMLAMYSGQIGSFSSRDLLLFFIMWEFELIPVYLLLSIWGGKRRLYSATNFILYTAGGSIFLLMGVLGVGLYGSNEPTLNFETSVNQSYPVALEIIFYIGFFIAFAVKSPIIPLHTWLPDTHGEAHYSTCMLLAGILLKMGAYGLIRINMELLPHAHSIFSPWLVIVGTIQIIYAASTSPGQRNLKKRIAYSSVSHMGFILIGIGSITDTGLNGAILQIISHGFIGAALFFLAGTSYDRIRLVYLDEMGGIAIPMPKIFTMFTSFSMASLALPGMSGFVAELIVFFGIITSQKYLLMPKILITFVMAIGMILTPIYSLSMLRQMFYGYKLFNAPNSYVFDSGPRELFVSISIFLPVIGIGMYPDFVLSLSVDKVEVILSNFFYR</sequence>
<proteinExistence type="inferred from homology"/>
<reference key="1">
    <citation type="journal article" date="2004" name="DNA Res.">
        <title>Complete chloroplast genome sequence from Korea ginseng (Panax schinseng Nees) and comparative analysis of sequence evolution among 17 vascular plants.</title>
        <authorList>
            <person name="Kim K.-J."/>
            <person name="Lee H.-L."/>
        </authorList>
    </citation>
    <scope>NUCLEOTIDE SEQUENCE [LARGE SCALE GENOMIC DNA]</scope>
</reference>
<keyword id="KW-0150">Chloroplast</keyword>
<keyword id="KW-0472">Membrane</keyword>
<keyword id="KW-0520">NAD</keyword>
<keyword id="KW-0521">NADP</keyword>
<keyword id="KW-0934">Plastid</keyword>
<keyword id="KW-0618">Plastoquinone</keyword>
<keyword id="KW-0874">Quinone</keyword>
<keyword id="KW-0793">Thylakoid</keyword>
<keyword id="KW-1278">Translocase</keyword>
<keyword id="KW-0812">Transmembrane</keyword>
<keyword id="KW-1133">Transmembrane helix</keyword>
<comment type="catalytic activity">
    <reaction evidence="1">
        <text>a plastoquinone + NADH + (n+1) H(+)(in) = a plastoquinol + NAD(+) + n H(+)(out)</text>
        <dbReference type="Rhea" id="RHEA:42608"/>
        <dbReference type="Rhea" id="RHEA-COMP:9561"/>
        <dbReference type="Rhea" id="RHEA-COMP:9562"/>
        <dbReference type="ChEBI" id="CHEBI:15378"/>
        <dbReference type="ChEBI" id="CHEBI:17757"/>
        <dbReference type="ChEBI" id="CHEBI:57540"/>
        <dbReference type="ChEBI" id="CHEBI:57945"/>
        <dbReference type="ChEBI" id="CHEBI:62192"/>
    </reaction>
</comment>
<comment type="catalytic activity">
    <reaction evidence="1">
        <text>a plastoquinone + NADPH + (n+1) H(+)(in) = a plastoquinol + NADP(+) + n H(+)(out)</text>
        <dbReference type="Rhea" id="RHEA:42612"/>
        <dbReference type="Rhea" id="RHEA-COMP:9561"/>
        <dbReference type="Rhea" id="RHEA-COMP:9562"/>
        <dbReference type="ChEBI" id="CHEBI:15378"/>
        <dbReference type="ChEBI" id="CHEBI:17757"/>
        <dbReference type="ChEBI" id="CHEBI:57783"/>
        <dbReference type="ChEBI" id="CHEBI:58349"/>
        <dbReference type="ChEBI" id="CHEBI:62192"/>
    </reaction>
</comment>
<comment type="subcellular location">
    <subcellularLocation>
        <location evidence="1">Plastid</location>
        <location evidence="1">Chloroplast thylakoid membrane</location>
        <topology evidence="1">Multi-pass membrane protein</topology>
    </subcellularLocation>
</comment>
<comment type="similarity">
    <text evidence="1">Belongs to the complex I subunit 4 family.</text>
</comment>
<geneLocation type="chloroplast"/>
<gene>
    <name evidence="1" type="primary">ndhD</name>
    <name type="ORF">PSC1179</name>
</gene>